<proteinExistence type="inferred from homology"/>
<accession>Q0AVV3</accession>
<evidence type="ECO:0000255" key="1">
    <source>
        <dbReference type="HAMAP-Rule" id="MF_01815"/>
    </source>
</evidence>
<name>FABH_SYNWW</name>
<dbReference type="EC" id="2.3.1.180" evidence="1"/>
<dbReference type="EMBL" id="CP000448">
    <property type="protein sequence ID" value="ABI69151.1"/>
    <property type="molecule type" value="Genomic_DNA"/>
</dbReference>
<dbReference type="RefSeq" id="WP_011641246.1">
    <property type="nucleotide sequence ID" value="NC_008346.1"/>
</dbReference>
<dbReference type="SMR" id="Q0AVV3"/>
<dbReference type="STRING" id="335541.Swol_1853"/>
<dbReference type="KEGG" id="swo:Swol_1853"/>
<dbReference type="eggNOG" id="COG0332">
    <property type="taxonomic scope" value="Bacteria"/>
</dbReference>
<dbReference type="HOGENOM" id="CLU_039592_3_1_9"/>
<dbReference type="OrthoDB" id="9815506at2"/>
<dbReference type="UniPathway" id="UPA00094"/>
<dbReference type="Proteomes" id="UP000001968">
    <property type="component" value="Chromosome"/>
</dbReference>
<dbReference type="GO" id="GO:0005737">
    <property type="term" value="C:cytoplasm"/>
    <property type="evidence" value="ECO:0007669"/>
    <property type="project" value="UniProtKB-SubCell"/>
</dbReference>
<dbReference type="GO" id="GO:0004315">
    <property type="term" value="F:3-oxoacyl-[acyl-carrier-protein] synthase activity"/>
    <property type="evidence" value="ECO:0007669"/>
    <property type="project" value="InterPro"/>
</dbReference>
<dbReference type="GO" id="GO:0033818">
    <property type="term" value="F:beta-ketoacyl-acyl-carrier-protein synthase III activity"/>
    <property type="evidence" value="ECO:0007669"/>
    <property type="project" value="UniProtKB-UniRule"/>
</dbReference>
<dbReference type="GO" id="GO:0006633">
    <property type="term" value="P:fatty acid biosynthetic process"/>
    <property type="evidence" value="ECO:0007669"/>
    <property type="project" value="UniProtKB-UniRule"/>
</dbReference>
<dbReference type="GO" id="GO:0044550">
    <property type="term" value="P:secondary metabolite biosynthetic process"/>
    <property type="evidence" value="ECO:0007669"/>
    <property type="project" value="TreeGrafter"/>
</dbReference>
<dbReference type="CDD" id="cd00830">
    <property type="entry name" value="KAS_III"/>
    <property type="match status" value="1"/>
</dbReference>
<dbReference type="FunFam" id="3.40.47.10:FF:000004">
    <property type="entry name" value="3-oxoacyl-[acyl-carrier-protein] synthase 3"/>
    <property type="match status" value="1"/>
</dbReference>
<dbReference type="Gene3D" id="3.40.47.10">
    <property type="match status" value="1"/>
</dbReference>
<dbReference type="HAMAP" id="MF_01815">
    <property type="entry name" value="FabH"/>
    <property type="match status" value="1"/>
</dbReference>
<dbReference type="InterPro" id="IPR013747">
    <property type="entry name" value="ACP_syn_III_C"/>
</dbReference>
<dbReference type="InterPro" id="IPR013751">
    <property type="entry name" value="ACP_syn_III_N"/>
</dbReference>
<dbReference type="InterPro" id="IPR004655">
    <property type="entry name" value="FabH"/>
</dbReference>
<dbReference type="InterPro" id="IPR016039">
    <property type="entry name" value="Thiolase-like"/>
</dbReference>
<dbReference type="NCBIfam" id="TIGR00747">
    <property type="entry name" value="fabH"/>
    <property type="match status" value="1"/>
</dbReference>
<dbReference type="NCBIfam" id="NF006829">
    <property type="entry name" value="PRK09352.1"/>
    <property type="match status" value="1"/>
</dbReference>
<dbReference type="PANTHER" id="PTHR34069">
    <property type="entry name" value="3-OXOACYL-[ACYL-CARRIER-PROTEIN] SYNTHASE 3"/>
    <property type="match status" value="1"/>
</dbReference>
<dbReference type="PANTHER" id="PTHR34069:SF2">
    <property type="entry name" value="BETA-KETOACYL-[ACYL-CARRIER-PROTEIN] SYNTHASE III"/>
    <property type="match status" value="1"/>
</dbReference>
<dbReference type="Pfam" id="PF08545">
    <property type="entry name" value="ACP_syn_III"/>
    <property type="match status" value="1"/>
</dbReference>
<dbReference type="Pfam" id="PF08541">
    <property type="entry name" value="ACP_syn_III_C"/>
    <property type="match status" value="1"/>
</dbReference>
<dbReference type="SUPFAM" id="SSF53901">
    <property type="entry name" value="Thiolase-like"/>
    <property type="match status" value="1"/>
</dbReference>
<gene>
    <name evidence="1" type="primary">fabH</name>
    <name type="ordered locus">Swol_1853</name>
</gene>
<organism>
    <name type="scientific">Syntrophomonas wolfei subsp. wolfei (strain DSM 2245B / Goettingen)</name>
    <dbReference type="NCBI Taxonomy" id="335541"/>
    <lineage>
        <taxon>Bacteria</taxon>
        <taxon>Bacillati</taxon>
        <taxon>Bacillota</taxon>
        <taxon>Clostridia</taxon>
        <taxon>Eubacteriales</taxon>
        <taxon>Syntrophomonadaceae</taxon>
        <taxon>Syntrophomonas</taxon>
    </lineage>
</organism>
<reference key="1">
    <citation type="journal article" date="2010" name="Environ. Microbiol.">
        <title>The genome of Syntrophomonas wolfei: new insights into syntrophic metabolism and biohydrogen production.</title>
        <authorList>
            <person name="Sieber J.R."/>
            <person name="Sims D.R."/>
            <person name="Han C."/>
            <person name="Kim E."/>
            <person name="Lykidis A."/>
            <person name="Lapidus A.L."/>
            <person name="McDonnald E."/>
            <person name="Rohlin L."/>
            <person name="Culley D.E."/>
            <person name="Gunsalus R."/>
            <person name="McInerney M.J."/>
        </authorList>
    </citation>
    <scope>NUCLEOTIDE SEQUENCE [LARGE SCALE GENOMIC DNA]</scope>
    <source>
        <strain>DSM 2245B / Goettingen</strain>
    </source>
</reference>
<keyword id="KW-0012">Acyltransferase</keyword>
<keyword id="KW-0963">Cytoplasm</keyword>
<keyword id="KW-0275">Fatty acid biosynthesis</keyword>
<keyword id="KW-0276">Fatty acid metabolism</keyword>
<keyword id="KW-0444">Lipid biosynthesis</keyword>
<keyword id="KW-0443">Lipid metabolism</keyword>
<keyword id="KW-0511">Multifunctional enzyme</keyword>
<keyword id="KW-1185">Reference proteome</keyword>
<keyword id="KW-0808">Transferase</keyword>
<protein>
    <recommendedName>
        <fullName evidence="1">Beta-ketoacyl-[acyl-carrier-protein] synthase III</fullName>
        <shortName evidence="1">Beta-ketoacyl-ACP synthase III</shortName>
        <shortName evidence="1">KAS III</shortName>
        <ecNumber evidence="1">2.3.1.180</ecNumber>
    </recommendedName>
    <alternativeName>
        <fullName evidence="1">3-oxoacyl-[acyl-carrier-protein] synthase 3</fullName>
    </alternativeName>
    <alternativeName>
        <fullName evidence="1">3-oxoacyl-[acyl-carrier-protein] synthase III</fullName>
    </alternativeName>
</protein>
<feature type="chain" id="PRO_1000056436" description="Beta-ketoacyl-[acyl-carrier-protein] synthase III">
    <location>
        <begin position="1"/>
        <end position="332"/>
    </location>
</feature>
<feature type="region of interest" description="ACP-binding" evidence="1">
    <location>
        <begin position="253"/>
        <end position="257"/>
    </location>
</feature>
<feature type="active site" evidence="1">
    <location>
        <position position="112"/>
    </location>
</feature>
<feature type="active site" evidence="1">
    <location>
        <position position="252"/>
    </location>
</feature>
<feature type="active site" evidence="1">
    <location>
        <position position="282"/>
    </location>
</feature>
<sequence length="332" mass="35945">MKVQILGMGHSLPERILNNQELEQMVDTSNEWIVERTGILERRIADKDTATSDLCWQAAKMALERSATEAKELDLIIVGTSSPDMLFPSTACIVQDHLGARNAAAFDVEAGCTGFIYALGIAEKFLLSPEYKKILVIGADLCSRFTDYTDRNTCVLFGDGAGAAVVGKGNLGPGILSSYLAADGSGGKHLYMPAGGSALPPSKETVEQRLHFIRMDGNEIFRFATKIVVAVSEKLLSQAGLSYQDVDLFIPHQANLRIIKTAMKRMRIPAEKTLINLDHFGNMSAACIPVGLSMAEEAGKLKKGDLVLMVAFGAGLSYGGILLRWGRDQDVF</sequence>
<comment type="function">
    <text evidence="1">Catalyzes the condensation reaction of fatty acid synthesis by the addition to an acyl acceptor of two carbons from malonyl-ACP. Catalyzes the first condensation reaction which initiates fatty acid synthesis and may therefore play a role in governing the total rate of fatty acid production. Possesses both acetoacetyl-ACP synthase and acetyl transacylase activities. Its substrate specificity determines the biosynthesis of branched-chain and/or straight-chain of fatty acids.</text>
</comment>
<comment type="catalytic activity">
    <reaction evidence="1">
        <text>malonyl-[ACP] + acetyl-CoA + H(+) = 3-oxobutanoyl-[ACP] + CO2 + CoA</text>
        <dbReference type="Rhea" id="RHEA:12080"/>
        <dbReference type="Rhea" id="RHEA-COMP:9623"/>
        <dbReference type="Rhea" id="RHEA-COMP:9625"/>
        <dbReference type="ChEBI" id="CHEBI:15378"/>
        <dbReference type="ChEBI" id="CHEBI:16526"/>
        <dbReference type="ChEBI" id="CHEBI:57287"/>
        <dbReference type="ChEBI" id="CHEBI:57288"/>
        <dbReference type="ChEBI" id="CHEBI:78449"/>
        <dbReference type="ChEBI" id="CHEBI:78450"/>
        <dbReference type="EC" id="2.3.1.180"/>
    </reaction>
</comment>
<comment type="pathway">
    <text evidence="1">Lipid metabolism; fatty acid biosynthesis.</text>
</comment>
<comment type="subunit">
    <text evidence="1">Homodimer.</text>
</comment>
<comment type="subcellular location">
    <subcellularLocation>
        <location evidence="1">Cytoplasm</location>
    </subcellularLocation>
</comment>
<comment type="domain">
    <text evidence="1">The last Arg residue of the ACP-binding site is essential for the weak association between ACP/AcpP and FabH.</text>
</comment>
<comment type="similarity">
    <text evidence="1">Belongs to the thiolase-like superfamily. FabH family.</text>
</comment>